<accession>P27888</accession>
<reference key="1">
    <citation type="journal article" date="1993" name="J. Bacteriol.">
        <title>Characterization of the Rickettsia prowazekii pepA gene encoding leucine aminopeptidase.</title>
        <authorList>
            <person name="Wood D.O."/>
            <person name="Solomon M.J."/>
            <person name="Speed R.R."/>
        </authorList>
    </citation>
    <scope>NUCLEOTIDE SEQUENCE [GENOMIC DNA]</scope>
    <source>
        <strain>Madrid E</strain>
    </source>
</reference>
<reference key="2">
    <citation type="journal article" date="1998" name="Nature">
        <title>The genome sequence of Rickettsia prowazekii and the origin of mitochondria.</title>
        <authorList>
            <person name="Andersson S.G.E."/>
            <person name="Zomorodipour A."/>
            <person name="Andersson J.O."/>
            <person name="Sicheritz-Ponten T."/>
            <person name="Alsmark U.C.M."/>
            <person name="Podowski R.M."/>
            <person name="Naeslund A.K."/>
            <person name="Eriksson A.-S."/>
            <person name="Winkler H.H."/>
            <person name="Kurland C.G."/>
        </authorList>
    </citation>
    <scope>NUCLEOTIDE SEQUENCE [LARGE SCALE GENOMIC DNA]</scope>
    <source>
        <strain>Madrid E</strain>
    </source>
</reference>
<name>AMPA_RICPR</name>
<sequence length="500" mass="54006">MLNINFVNEESSTNQGLIVFIDEQLKLNNNLIALDQQHYELISKTIQNKLQFSGNYGQITVVPSVIKSCAVKYLIIVGLGNVEKLTEAKIEELGGKILQHATCAKIATIGLKIINRINRFTSPTFTSLIASGAFLASYRFHKYKTTLKEVEKFAVESIEILTDNNSEAMKLFEVKKLIAEAVFFTRDISNEPSNIKTPQVYAERIVEILEPLGVNIDVIGEHDIKNLGMGALLGVGQGSQNESKLVVMEYKGGSRDDSTLALVGKGVIFDTGGISLKPSSNMHLMRYDMAGSAAVVGTIIALASQKVPVNVVGVVGLVENMQSGNAQRPGDVVVTMSGQTAEVLNTDAEGRLVLADTVWYVQEKFNPKCVIDVATLTGAITVALGSTYAGCFSNNDELADKLIKAGEAVNEKLWRMPLHDDYDAMINSDIADIANIGNVPGAAGSCTAAHFIKRFIKDGVDWAHLDIAGVANSNNASALCPKGAVGYGVRLLEKFIKEYN</sequence>
<comment type="function">
    <text>Presumably involved in the processing and regular turnover of intracellular proteins. Catalyzes the removal of unsubstituted N-terminal amino acids from various peptides.</text>
</comment>
<comment type="catalytic activity">
    <reaction>
        <text>Release of an N-terminal amino acid, Xaa-|-Yaa-, in which Xaa is preferably Leu, but may be other amino acids including Pro although not Arg or Lys, and Yaa may be Pro. Amino acid amides and methyl esters are also readily hydrolyzed, but rates on arylamides are exceedingly low.</text>
        <dbReference type="EC" id="3.4.11.1"/>
    </reaction>
</comment>
<comment type="catalytic activity">
    <reaction>
        <text>Release of an N-terminal amino acid, preferentially leucine, but not glutamic or aspartic acids.</text>
        <dbReference type="EC" id="3.4.11.10"/>
    </reaction>
</comment>
<comment type="cofactor">
    <cofactor evidence="1">
        <name>Mn(2+)</name>
        <dbReference type="ChEBI" id="CHEBI:29035"/>
    </cofactor>
    <text evidence="1">Binds 2 manganese ions per subunit.</text>
</comment>
<comment type="subcellular location">
    <subcellularLocation>
        <location>Cytoplasm</location>
    </subcellularLocation>
</comment>
<comment type="similarity">
    <text evidence="3">Belongs to the peptidase M17 family.</text>
</comment>
<gene>
    <name type="primary">pepA</name>
    <name type="ordered locus">RP142</name>
</gene>
<feature type="chain" id="PRO_0000165792" description="Cytosol aminopeptidase">
    <location>
        <begin position="1"/>
        <end position="500"/>
    </location>
</feature>
<feature type="active site" evidence="2">
    <location>
        <position position="277"/>
    </location>
</feature>
<feature type="active site" evidence="2">
    <location>
        <position position="351"/>
    </location>
</feature>
<feature type="binding site" evidence="1">
    <location>
        <position position="265"/>
    </location>
    <ligand>
        <name>Mn(2+)</name>
        <dbReference type="ChEBI" id="CHEBI:29035"/>
        <label>2</label>
    </ligand>
</feature>
<feature type="binding site" evidence="1">
    <location>
        <position position="270"/>
    </location>
    <ligand>
        <name>Mn(2+)</name>
        <dbReference type="ChEBI" id="CHEBI:29035"/>
        <label>1</label>
    </ligand>
</feature>
<feature type="binding site" evidence="1">
    <location>
        <position position="270"/>
    </location>
    <ligand>
        <name>Mn(2+)</name>
        <dbReference type="ChEBI" id="CHEBI:29035"/>
        <label>2</label>
    </ligand>
</feature>
<feature type="binding site" evidence="1">
    <location>
        <position position="288"/>
    </location>
    <ligand>
        <name>Mn(2+)</name>
        <dbReference type="ChEBI" id="CHEBI:29035"/>
        <label>2</label>
    </ligand>
</feature>
<feature type="binding site" evidence="1">
    <location>
        <position position="347"/>
    </location>
    <ligand>
        <name>Mn(2+)</name>
        <dbReference type="ChEBI" id="CHEBI:29035"/>
        <label>1</label>
    </ligand>
</feature>
<feature type="binding site" evidence="1">
    <location>
        <position position="349"/>
    </location>
    <ligand>
        <name>Mn(2+)</name>
        <dbReference type="ChEBI" id="CHEBI:29035"/>
        <label>1</label>
    </ligand>
</feature>
<feature type="binding site" evidence="1">
    <location>
        <position position="349"/>
    </location>
    <ligand>
        <name>Mn(2+)</name>
        <dbReference type="ChEBI" id="CHEBI:29035"/>
        <label>2</label>
    </ligand>
</feature>
<dbReference type="EC" id="3.4.11.1"/>
<dbReference type="EC" id="3.4.11.10"/>
<dbReference type="EMBL" id="M68966">
    <property type="protein sequence ID" value="AAA26388.1"/>
    <property type="molecule type" value="Genomic_DNA"/>
</dbReference>
<dbReference type="EMBL" id="AJ235270">
    <property type="protein sequence ID" value="CAA14610.1"/>
    <property type="molecule type" value="Genomic_DNA"/>
</dbReference>
<dbReference type="PIR" id="A40631">
    <property type="entry name" value="A40631"/>
</dbReference>
<dbReference type="RefSeq" id="NP_220533.1">
    <property type="nucleotide sequence ID" value="NC_000963.1"/>
</dbReference>
<dbReference type="RefSeq" id="WP_004597194.1">
    <property type="nucleotide sequence ID" value="NC_000963.1"/>
</dbReference>
<dbReference type="SMR" id="P27888"/>
<dbReference type="STRING" id="272947.gene:17555225"/>
<dbReference type="EnsemblBacteria" id="CAA14610">
    <property type="protein sequence ID" value="CAA14610"/>
    <property type="gene ID" value="CAA14610"/>
</dbReference>
<dbReference type="KEGG" id="rpr:RP142"/>
<dbReference type="PATRIC" id="fig|272947.5.peg.145"/>
<dbReference type="eggNOG" id="COG0260">
    <property type="taxonomic scope" value="Bacteria"/>
</dbReference>
<dbReference type="HOGENOM" id="CLU_013734_2_2_5"/>
<dbReference type="OrthoDB" id="9809354at2"/>
<dbReference type="Proteomes" id="UP000002480">
    <property type="component" value="Chromosome"/>
</dbReference>
<dbReference type="GO" id="GO:0005737">
    <property type="term" value="C:cytoplasm"/>
    <property type="evidence" value="ECO:0007669"/>
    <property type="project" value="UniProtKB-SubCell"/>
</dbReference>
<dbReference type="GO" id="GO:0030145">
    <property type="term" value="F:manganese ion binding"/>
    <property type="evidence" value="ECO:0007669"/>
    <property type="project" value="UniProtKB-UniRule"/>
</dbReference>
<dbReference type="GO" id="GO:0070006">
    <property type="term" value="F:metalloaminopeptidase activity"/>
    <property type="evidence" value="ECO:0007669"/>
    <property type="project" value="InterPro"/>
</dbReference>
<dbReference type="GO" id="GO:0006508">
    <property type="term" value="P:proteolysis"/>
    <property type="evidence" value="ECO:0007669"/>
    <property type="project" value="UniProtKB-KW"/>
</dbReference>
<dbReference type="CDD" id="cd00433">
    <property type="entry name" value="Peptidase_M17"/>
    <property type="match status" value="1"/>
</dbReference>
<dbReference type="Gene3D" id="3.40.220.10">
    <property type="entry name" value="Leucine Aminopeptidase, subunit E, domain 1"/>
    <property type="match status" value="1"/>
</dbReference>
<dbReference type="Gene3D" id="3.40.630.10">
    <property type="entry name" value="Zn peptidases"/>
    <property type="match status" value="1"/>
</dbReference>
<dbReference type="HAMAP" id="MF_00181">
    <property type="entry name" value="Cytosol_peptidase_M17"/>
    <property type="match status" value="1"/>
</dbReference>
<dbReference type="InterPro" id="IPR011356">
    <property type="entry name" value="Leucine_aapep/pepB"/>
</dbReference>
<dbReference type="InterPro" id="IPR043472">
    <property type="entry name" value="Macro_dom-like"/>
</dbReference>
<dbReference type="InterPro" id="IPR000819">
    <property type="entry name" value="Peptidase_M17_C"/>
</dbReference>
<dbReference type="InterPro" id="IPR023042">
    <property type="entry name" value="Peptidase_M17_leu_NH2_pept"/>
</dbReference>
<dbReference type="InterPro" id="IPR008283">
    <property type="entry name" value="Peptidase_M17_N"/>
</dbReference>
<dbReference type="NCBIfam" id="NF002073">
    <property type="entry name" value="PRK00913.1-2"/>
    <property type="match status" value="1"/>
</dbReference>
<dbReference type="NCBIfam" id="NF002074">
    <property type="entry name" value="PRK00913.1-4"/>
    <property type="match status" value="1"/>
</dbReference>
<dbReference type="NCBIfam" id="NF002075">
    <property type="entry name" value="PRK00913.2-2"/>
    <property type="match status" value="1"/>
</dbReference>
<dbReference type="NCBIfam" id="NF002077">
    <property type="entry name" value="PRK00913.2-4"/>
    <property type="match status" value="1"/>
</dbReference>
<dbReference type="PANTHER" id="PTHR11963:SF23">
    <property type="entry name" value="CYTOSOL AMINOPEPTIDASE"/>
    <property type="match status" value="1"/>
</dbReference>
<dbReference type="PANTHER" id="PTHR11963">
    <property type="entry name" value="LEUCINE AMINOPEPTIDASE-RELATED"/>
    <property type="match status" value="1"/>
</dbReference>
<dbReference type="Pfam" id="PF00883">
    <property type="entry name" value="Peptidase_M17"/>
    <property type="match status" value="1"/>
</dbReference>
<dbReference type="Pfam" id="PF02789">
    <property type="entry name" value="Peptidase_M17_N"/>
    <property type="match status" value="1"/>
</dbReference>
<dbReference type="PRINTS" id="PR00481">
    <property type="entry name" value="LAMNOPPTDASE"/>
</dbReference>
<dbReference type="SUPFAM" id="SSF52949">
    <property type="entry name" value="Macro domain-like"/>
    <property type="match status" value="1"/>
</dbReference>
<dbReference type="SUPFAM" id="SSF53187">
    <property type="entry name" value="Zn-dependent exopeptidases"/>
    <property type="match status" value="1"/>
</dbReference>
<dbReference type="PROSITE" id="PS00631">
    <property type="entry name" value="CYTOSOL_AP"/>
    <property type="match status" value="1"/>
</dbReference>
<keyword id="KW-0031">Aminopeptidase</keyword>
<keyword id="KW-0963">Cytoplasm</keyword>
<keyword id="KW-0378">Hydrolase</keyword>
<keyword id="KW-0464">Manganese</keyword>
<keyword id="KW-0479">Metal-binding</keyword>
<keyword id="KW-0645">Protease</keyword>
<keyword id="KW-1185">Reference proteome</keyword>
<evidence type="ECO:0000250" key="1"/>
<evidence type="ECO:0000255" key="2"/>
<evidence type="ECO:0000305" key="3"/>
<organism>
    <name type="scientific">Rickettsia prowazekii (strain Madrid E)</name>
    <dbReference type="NCBI Taxonomy" id="272947"/>
    <lineage>
        <taxon>Bacteria</taxon>
        <taxon>Pseudomonadati</taxon>
        <taxon>Pseudomonadota</taxon>
        <taxon>Alphaproteobacteria</taxon>
        <taxon>Rickettsiales</taxon>
        <taxon>Rickettsiaceae</taxon>
        <taxon>Rickettsieae</taxon>
        <taxon>Rickettsia</taxon>
        <taxon>typhus group</taxon>
    </lineage>
</organism>
<proteinExistence type="inferred from homology"/>
<protein>
    <recommendedName>
        <fullName>Cytosol aminopeptidase</fullName>
        <ecNumber>3.4.11.1</ecNumber>
    </recommendedName>
    <alternativeName>
        <fullName>Leucine aminopeptidase</fullName>
        <shortName>LAP</shortName>
        <ecNumber>3.4.11.10</ecNumber>
    </alternativeName>
    <alternativeName>
        <fullName>Leucyl aminopeptidase</fullName>
    </alternativeName>
</protein>